<comment type="function">
    <text evidence="1">This protein is involved in the repair of mismatches in DNA. It is required for dam-dependent methyl-directed DNA mismatch repair. May act as a 'molecular matchmaker', a protein that promotes the formation of a stable complex between two or more DNA-binding proteins in an ATP-dependent manner without itself being part of a final effector complex.</text>
</comment>
<comment type="similarity">
    <text evidence="1">Belongs to the DNA mismatch repair MutL/HexB family.</text>
</comment>
<protein>
    <recommendedName>
        <fullName evidence="1">DNA mismatch repair protein MutL</fullName>
    </recommendedName>
</protein>
<name>MUTL_YERPB</name>
<accession>B2K202</accession>
<proteinExistence type="inferred from homology"/>
<keyword id="KW-0227">DNA damage</keyword>
<keyword id="KW-0234">DNA repair</keyword>
<organism>
    <name type="scientific">Yersinia pseudotuberculosis serotype IB (strain PB1/+)</name>
    <dbReference type="NCBI Taxonomy" id="502801"/>
    <lineage>
        <taxon>Bacteria</taxon>
        <taxon>Pseudomonadati</taxon>
        <taxon>Pseudomonadota</taxon>
        <taxon>Gammaproteobacteria</taxon>
        <taxon>Enterobacterales</taxon>
        <taxon>Yersiniaceae</taxon>
        <taxon>Yersinia</taxon>
    </lineage>
</organism>
<dbReference type="EMBL" id="CP001048">
    <property type="protein sequence ID" value="ACC87437.1"/>
    <property type="molecule type" value="Genomic_DNA"/>
</dbReference>
<dbReference type="RefSeq" id="WP_002209148.1">
    <property type="nucleotide sequence ID" value="NZ_CP009780.1"/>
</dbReference>
<dbReference type="SMR" id="B2K202"/>
<dbReference type="GeneID" id="57974236"/>
<dbReference type="KEGG" id="ypb:YPTS_0451"/>
<dbReference type="PATRIC" id="fig|502801.10.peg.4126"/>
<dbReference type="GO" id="GO:0032300">
    <property type="term" value="C:mismatch repair complex"/>
    <property type="evidence" value="ECO:0007669"/>
    <property type="project" value="InterPro"/>
</dbReference>
<dbReference type="GO" id="GO:0005524">
    <property type="term" value="F:ATP binding"/>
    <property type="evidence" value="ECO:0007669"/>
    <property type="project" value="InterPro"/>
</dbReference>
<dbReference type="GO" id="GO:0016887">
    <property type="term" value="F:ATP hydrolysis activity"/>
    <property type="evidence" value="ECO:0007669"/>
    <property type="project" value="InterPro"/>
</dbReference>
<dbReference type="GO" id="GO:0140664">
    <property type="term" value="F:ATP-dependent DNA damage sensor activity"/>
    <property type="evidence" value="ECO:0007669"/>
    <property type="project" value="InterPro"/>
</dbReference>
<dbReference type="GO" id="GO:0030983">
    <property type="term" value="F:mismatched DNA binding"/>
    <property type="evidence" value="ECO:0007669"/>
    <property type="project" value="InterPro"/>
</dbReference>
<dbReference type="GO" id="GO:0006298">
    <property type="term" value="P:mismatch repair"/>
    <property type="evidence" value="ECO:0007669"/>
    <property type="project" value="UniProtKB-UniRule"/>
</dbReference>
<dbReference type="CDD" id="cd16926">
    <property type="entry name" value="HATPase_MutL-MLH-PMS-like"/>
    <property type="match status" value="1"/>
</dbReference>
<dbReference type="CDD" id="cd03482">
    <property type="entry name" value="MutL_Trans_MutL"/>
    <property type="match status" value="1"/>
</dbReference>
<dbReference type="FunFam" id="3.30.230.10:FF:000013">
    <property type="entry name" value="DNA mismatch repair endonuclease MutL"/>
    <property type="match status" value="1"/>
</dbReference>
<dbReference type="FunFam" id="3.30.565.10:FF:000003">
    <property type="entry name" value="DNA mismatch repair endonuclease MutL"/>
    <property type="match status" value="1"/>
</dbReference>
<dbReference type="FunFam" id="3.30.1370.100:FF:000002">
    <property type="entry name" value="DNA mismatch repair protein MutL"/>
    <property type="match status" value="1"/>
</dbReference>
<dbReference type="Gene3D" id="3.30.230.10">
    <property type="match status" value="1"/>
</dbReference>
<dbReference type="Gene3D" id="3.30.565.10">
    <property type="entry name" value="Histidine kinase-like ATPase, C-terminal domain"/>
    <property type="match status" value="1"/>
</dbReference>
<dbReference type="Gene3D" id="3.30.1540.20">
    <property type="entry name" value="MutL, C-terminal domain, dimerisation subdomain"/>
    <property type="match status" value="1"/>
</dbReference>
<dbReference type="Gene3D" id="3.30.1370.100">
    <property type="entry name" value="MutL, C-terminal domain, regulatory subdomain"/>
    <property type="match status" value="1"/>
</dbReference>
<dbReference type="HAMAP" id="MF_00149">
    <property type="entry name" value="DNA_mis_repair"/>
    <property type="match status" value="1"/>
</dbReference>
<dbReference type="InterPro" id="IPR014762">
    <property type="entry name" value="DNA_mismatch_repair_CS"/>
</dbReference>
<dbReference type="InterPro" id="IPR020667">
    <property type="entry name" value="DNA_mismatch_repair_MutL"/>
</dbReference>
<dbReference type="InterPro" id="IPR013507">
    <property type="entry name" value="DNA_mismatch_S5_2-like"/>
</dbReference>
<dbReference type="InterPro" id="IPR036890">
    <property type="entry name" value="HATPase_C_sf"/>
</dbReference>
<dbReference type="InterPro" id="IPR002099">
    <property type="entry name" value="MutL/Mlh/PMS"/>
</dbReference>
<dbReference type="InterPro" id="IPR038973">
    <property type="entry name" value="MutL/Mlh/Pms-like"/>
</dbReference>
<dbReference type="InterPro" id="IPR014790">
    <property type="entry name" value="MutL_C"/>
</dbReference>
<dbReference type="InterPro" id="IPR042120">
    <property type="entry name" value="MutL_C_dimsub"/>
</dbReference>
<dbReference type="InterPro" id="IPR042121">
    <property type="entry name" value="MutL_C_regsub"/>
</dbReference>
<dbReference type="InterPro" id="IPR037198">
    <property type="entry name" value="MutL_C_sf"/>
</dbReference>
<dbReference type="InterPro" id="IPR020568">
    <property type="entry name" value="Ribosomal_Su5_D2-typ_SF"/>
</dbReference>
<dbReference type="InterPro" id="IPR014721">
    <property type="entry name" value="Ribsml_uS5_D2-typ_fold_subgr"/>
</dbReference>
<dbReference type="NCBIfam" id="TIGR00585">
    <property type="entry name" value="mutl"/>
    <property type="match status" value="1"/>
</dbReference>
<dbReference type="NCBIfam" id="NF000948">
    <property type="entry name" value="PRK00095.1-1"/>
    <property type="match status" value="1"/>
</dbReference>
<dbReference type="PANTHER" id="PTHR10073">
    <property type="entry name" value="DNA MISMATCH REPAIR PROTEIN MLH, PMS, MUTL"/>
    <property type="match status" value="1"/>
</dbReference>
<dbReference type="PANTHER" id="PTHR10073:SF12">
    <property type="entry name" value="DNA MISMATCH REPAIR PROTEIN MLH1"/>
    <property type="match status" value="1"/>
</dbReference>
<dbReference type="Pfam" id="PF01119">
    <property type="entry name" value="DNA_mis_repair"/>
    <property type="match status" value="1"/>
</dbReference>
<dbReference type="Pfam" id="PF13589">
    <property type="entry name" value="HATPase_c_3"/>
    <property type="match status" value="1"/>
</dbReference>
<dbReference type="Pfam" id="PF08676">
    <property type="entry name" value="MutL_C"/>
    <property type="match status" value="1"/>
</dbReference>
<dbReference type="SMART" id="SM01340">
    <property type="entry name" value="DNA_mis_repair"/>
    <property type="match status" value="1"/>
</dbReference>
<dbReference type="SMART" id="SM00853">
    <property type="entry name" value="MutL_C"/>
    <property type="match status" value="1"/>
</dbReference>
<dbReference type="SUPFAM" id="SSF55874">
    <property type="entry name" value="ATPase domain of HSP90 chaperone/DNA topoisomerase II/histidine kinase"/>
    <property type="match status" value="1"/>
</dbReference>
<dbReference type="SUPFAM" id="SSF118116">
    <property type="entry name" value="DNA mismatch repair protein MutL"/>
    <property type="match status" value="1"/>
</dbReference>
<dbReference type="SUPFAM" id="SSF54211">
    <property type="entry name" value="Ribosomal protein S5 domain 2-like"/>
    <property type="match status" value="1"/>
</dbReference>
<dbReference type="PROSITE" id="PS00058">
    <property type="entry name" value="DNA_MISMATCH_REPAIR_1"/>
    <property type="match status" value="1"/>
</dbReference>
<feature type="chain" id="PRO_1000096704" description="DNA mismatch repair protein MutL">
    <location>
        <begin position="1"/>
        <end position="635"/>
    </location>
</feature>
<feature type="region of interest" description="Disordered" evidence="2">
    <location>
        <begin position="359"/>
        <end position="399"/>
    </location>
</feature>
<feature type="compositionally biased region" description="Low complexity" evidence="2">
    <location>
        <begin position="364"/>
        <end position="377"/>
    </location>
</feature>
<feature type="compositionally biased region" description="Basic and acidic residues" evidence="2">
    <location>
        <begin position="378"/>
        <end position="399"/>
    </location>
</feature>
<reference key="1">
    <citation type="submission" date="2008-04" db="EMBL/GenBank/DDBJ databases">
        <title>Complete sequence of Yersinia pseudotuberculosis PB1/+.</title>
        <authorList>
            <person name="Copeland A."/>
            <person name="Lucas S."/>
            <person name="Lapidus A."/>
            <person name="Glavina del Rio T."/>
            <person name="Dalin E."/>
            <person name="Tice H."/>
            <person name="Bruce D."/>
            <person name="Goodwin L."/>
            <person name="Pitluck S."/>
            <person name="Munk A.C."/>
            <person name="Brettin T."/>
            <person name="Detter J.C."/>
            <person name="Han C."/>
            <person name="Tapia R."/>
            <person name="Schmutz J."/>
            <person name="Larimer F."/>
            <person name="Land M."/>
            <person name="Hauser L."/>
            <person name="Challacombe J.F."/>
            <person name="Green L."/>
            <person name="Lindler L.E."/>
            <person name="Nikolich M.P."/>
            <person name="Richardson P."/>
        </authorList>
    </citation>
    <scope>NUCLEOTIDE SEQUENCE [LARGE SCALE GENOMIC DNA]</scope>
    <source>
        <strain>PB1/+</strain>
    </source>
</reference>
<gene>
    <name evidence="1" type="primary">mutL</name>
    <name type="ordered locus">YPTS_0451</name>
</gene>
<evidence type="ECO:0000255" key="1">
    <source>
        <dbReference type="HAMAP-Rule" id="MF_00149"/>
    </source>
</evidence>
<evidence type="ECO:0000256" key="2">
    <source>
        <dbReference type="SAM" id="MobiDB-lite"/>
    </source>
</evidence>
<sequence>MPIQILPPQLANQIAAGEVVERPASVVKELVENSLDAGATRIDIDIERGGAKLIRIRDNGCGISKDDLALALARHATSKISSLEDLEAILSMGFRGEALASISSVSRLILTSRTAEQSEAWQAYAEGRDMAVTIKPAAHPVGSTLEVLDLFYNTPARRKFMRTEKTEFGHIDEVVRRIALARFDVAINLNHNGKLIRQYRAAPDPAQHERRLASICGPAFLQHALAIAWQHGDLNIHGWVADPAASHTLSEMQYCYVNNRMMRDRLINHAIRQAYQDRLNDAQQPAYVLYLDIDPHQVDVNVHPAKHEVRFHQARLVHDFIYQAVTAVLQQTNAPILNISEEGEVDAPRWQQENRVAAGTNKYAQPEAAKSSAAEQAVARERSSARERAAPAYKEDHPYQKQQGELYRQLLQPSAAAKPATSPAAIPASSVSSPSIPVQRITQAEEPLHGDNYSFGRVLTVFPPCYALIEYQGGVALLSLAVAERWLKQAQLSPPEEGLRPQPLLIPLKITLDKNEIAACQNHEKLLITMGIELSVEQGRATLRAVSLPLRQQNLQKLIPELLGYLSQHEEISPDTLATWLARHLGSEHEVWNVSQAIQLLTEVERLCPQLVQSPPAGLLQPIDIKAALATLTHE</sequence>